<reference key="1">
    <citation type="journal article" date="2010" name="PLoS ONE">
        <title>Genome sequence of Cronobacter sakazakii BAA-894 and comparative genomic hybridization analysis with other Cronobacter species.</title>
        <authorList>
            <person name="Kucerova E."/>
            <person name="Clifton S.W."/>
            <person name="Xia X.Q."/>
            <person name="Long F."/>
            <person name="Porwollik S."/>
            <person name="Fulton L."/>
            <person name="Fronick C."/>
            <person name="Minx P."/>
            <person name="Kyung K."/>
            <person name="Warren W."/>
            <person name="Fulton R."/>
            <person name="Feng D."/>
            <person name="Wollam A."/>
            <person name="Shah N."/>
            <person name="Bhonagiri V."/>
            <person name="Nash W.E."/>
            <person name="Hallsworth-Pepin K."/>
            <person name="Wilson R.K."/>
            <person name="McClelland M."/>
            <person name="Forsythe S.J."/>
        </authorList>
    </citation>
    <scope>NUCLEOTIDE SEQUENCE [LARGE SCALE GENOMIC DNA]</scope>
    <source>
        <strain>ATCC BAA-894</strain>
    </source>
</reference>
<organism>
    <name type="scientific">Cronobacter sakazakii (strain ATCC BAA-894)</name>
    <name type="common">Enterobacter sakazakii</name>
    <dbReference type="NCBI Taxonomy" id="290339"/>
    <lineage>
        <taxon>Bacteria</taxon>
        <taxon>Pseudomonadati</taxon>
        <taxon>Pseudomonadota</taxon>
        <taxon>Gammaproteobacteria</taxon>
        <taxon>Enterobacterales</taxon>
        <taxon>Enterobacteriaceae</taxon>
        <taxon>Cronobacter</taxon>
    </lineage>
</organism>
<keyword id="KW-0479">Metal-binding</keyword>
<keyword id="KW-0520">NAD</keyword>
<keyword id="KW-0560">Oxidoreductase</keyword>
<keyword id="KW-1185">Reference proteome</keyword>
<feature type="chain" id="PRO_0000323536" description="NAD-dependent malic enzyme">
    <location>
        <begin position="1"/>
        <end position="566"/>
    </location>
</feature>
<feature type="active site" description="Proton donor" evidence="1">
    <location>
        <position position="104"/>
    </location>
</feature>
<feature type="active site" description="Proton acceptor" evidence="1">
    <location>
        <position position="175"/>
    </location>
</feature>
<feature type="binding site" evidence="1">
    <location>
        <position position="157"/>
    </location>
    <ligand>
        <name>NAD(+)</name>
        <dbReference type="ChEBI" id="CHEBI:57540"/>
    </ligand>
</feature>
<feature type="binding site" evidence="1">
    <location>
        <position position="246"/>
    </location>
    <ligand>
        <name>a divalent metal cation</name>
        <dbReference type="ChEBI" id="CHEBI:60240"/>
    </ligand>
</feature>
<feature type="binding site" evidence="1">
    <location>
        <position position="247"/>
    </location>
    <ligand>
        <name>a divalent metal cation</name>
        <dbReference type="ChEBI" id="CHEBI:60240"/>
    </ligand>
</feature>
<feature type="binding site" evidence="1">
    <location>
        <position position="270"/>
    </location>
    <ligand>
        <name>a divalent metal cation</name>
        <dbReference type="ChEBI" id="CHEBI:60240"/>
    </ligand>
</feature>
<feature type="binding site" evidence="1">
    <location>
        <position position="270"/>
    </location>
    <ligand>
        <name>NAD(+)</name>
        <dbReference type="ChEBI" id="CHEBI:57540"/>
    </ligand>
</feature>
<feature type="binding site" evidence="1">
    <location>
        <position position="419"/>
    </location>
    <ligand>
        <name>NAD(+)</name>
        <dbReference type="ChEBI" id="CHEBI:57540"/>
    </ligand>
</feature>
<feature type="site" description="Important for activity" evidence="1">
    <location>
        <position position="270"/>
    </location>
</feature>
<comment type="catalytic activity">
    <reaction evidence="1">
        <text>(S)-malate + NAD(+) = pyruvate + CO2 + NADH</text>
        <dbReference type="Rhea" id="RHEA:12653"/>
        <dbReference type="ChEBI" id="CHEBI:15361"/>
        <dbReference type="ChEBI" id="CHEBI:15589"/>
        <dbReference type="ChEBI" id="CHEBI:16526"/>
        <dbReference type="ChEBI" id="CHEBI:57540"/>
        <dbReference type="ChEBI" id="CHEBI:57945"/>
        <dbReference type="EC" id="1.1.1.38"/>
    </reaction>
</comment>
<comment type="catalytic activity">
    <reaction evidence="1">
        <text>oxaloacetate + H(+) = pyruvate + CO2</text>
        <dbReference type="Rhea" id="RHEA:15641"/>
        <dbReference type="ChEBI" id="CHEBI:15361"/>
        <dbReference type="ChEBI" id="CHEBI:15378"/>
        <dbReference type="ChEBI" id="CHEBI:16452"/>
        <dbReference type="ChEBI" id="CHEBI:16526"/>
        <dbReference type="EC" id="1.1.1.38"/>
    </reaction>
</comment>
<comment type="cofactor">
    <cofactor evidence="1">
        <name>Mg(2+)</name>
        <dbReference type="ChEBI" id="CHEBI:18420"/>
    </cofactor>
    <cofactor evidence="1">
        <name>Mn(2+)</name>
        <dbReference type="ChEBI" id="CHEBI:29035"/>
    </cofactor>
    <text evidence="1">Divalent metal cations. Prefers magnesium or manganese.</text>
</comment>
<comment type="subunit">
    <text evidence="1">Homotetramer.</text>
</comment>
<comment type="similarity">
    <text evidence="1">Belongs to the malic enzymes family.</text>
</comment>
<comment type="sequence caution" evidence="2">
    <conflict type="erroneous initiation">
        <sequence resource="EMBL-CDS" id="ABU78204"/>
    </conflict>
</comment>
<name>MAO1_CROS8</name>
<sequence>MEIKHKKNRSLYIPYAGPVLLEFPLLNKGSAFSMEERSNFNLLGLLPEVVETIEEQAERAWRQFEDFKTDIDKHIYLRNIQDTNETLFYRLLENHLEVMMPIIYTPTVGSACERFSEIYRRARGVFISWPNRHNMDDILQNVPIHNIKVIVVTDGERILGLGDQGIGGMGIPIGKLSLYTACGGISPAYTLPIVLDVGTNNQQLLNDPLYMGWRHPRITDDEYYAFVDDFIQAVKQRWPNVLLQFEDFAQKNAMPLLERYRDEICCFNDDIQGTAAVTLGTLIAASRAAGSQLSEQKIVFLGAGSAGCGIAEQIIAWMRTEGGLSDEQARARVFMVDRFGLLTDNMPNLLSFQSKLVQKRDSLKGWDTQSDSISLLDVVRNAKPDILIGVSGQTGLFTEEIIREMHKHCARPIVMPLSNPTSRVEATPHDILNWTDGAALVATGSPFQPVTVKEKTYPIAQCNNAYIFPGIGLGIISSGALRVTDEMMMAASEALASHSPLVNTGSGLVLPPLTDIQQVSKDIAFAVGKMAQQQGVAVKTSAEALLQAIEENFWLPEYRSYRRTSI</sequence>
<evidence type="ECO:0000255" key="1">
    <source>
        <dbReference type="HAMAP-Rule" id="MF_01619"/>
    </source>
</evidence>
<evidence type="ECO:0000305" key="2"/>
<accession>A7MN74</accession>
<protein>
    <recommendedName>
        <fullName evidence="1">NAD-dependent malic enzyme</fullName>
        <shortName evidence="1">NAD-ME</shortName>
        <ecNumber evidence="1">1.1.1.38</ecNumber>
    </recommendedName>
</protein>
<gene>
    <name evidence="1" type="primary">maeA</name>
    <name type="ordered locus">ESA_02975</name>
</gene>
<proteinExistence type="inferred from homology"/>
<dbReference type="EC" id="1.1.1.38" evidence="1"/>
<dbReference type="EMBL" id="CP000783">
    <property type="protein sequence ID" value="ABU78204.1"/>
    <property type="status" value="ALT_INIT"/>
    <property type="molecule type" value="Genomic_DNA"/>
</dbReference>
<dbReference type="RefSeq" id="WP_041460595.1">
    <property type="nucleotide sequence ID" value="NC_009778.1"/>
</dbReference>
<dbReference type="SMR" id="A7MN74"/>
<dbReference type="KEGG" id="esa:ESA_02975"/>
<dbReference type="PATRIC" id="fig|290339.8.peg.2664"/>
<dbReference type="HOGENOM" id="CLU_011405_5_2_6"/>
<dbReference type="Proteomes" id="UP000000260">
    <property type="component" value="Chromosome"/>
</dbReference>
<dbReference type="GO" id="GO:0005829">
    <property type="term" value="C:cytosol"/>
    <property type="evidence" value="ECO:0007669"/>
    <property type="project" value="TreeGrafter"/>
</dbReference>
<dbReference type="GO" id="GO:0004471">
    <property type="term" value="F:malate dehydrogenase (decarboxylating) (NAD+) activity"/>
    <property type="evidence" value="ECO:0007669"/>
    <property type="project" value="UniProtKB-UniRule"/>
</dbReference>
<dbReference type="GO" id="GO:0046872">
    <property type="term" value="F:metal ion binding"/>
    <property type="evidence" value="ECO:0007669"/>
    <property type="project" value="UniProtKB-KW"/>
</dbReference>
<dbReference type="GO" id="GO:0051287">
    <property type="term" value="F:NAD binding"/>
    <property type="evidence" value="ECO:0007669"/>
    <property type="project" value="InterPro"/>
</dbReference>
<dbReference type="GO" id="GO:0008948">
    <property type="term" value="F:oxaloacetate decarboxylase activity"/>
    <property type="evidence" value="ECO:0007669"/>
    <property type="project" value="UniProtKB-UniRule"/>
</dbReference>
<dbReference type="GO" id="GO:0006108">
    <property type="term" value="P:malate metabolic process"/>
    <property type="evidence" value="ECO:0007669"/>
    <property type="project" value="TreeGrafter"/>
</dbReference>
<dbReference type="CDD" id="cd05312">
    <property type="entry name" value="NAD_bind_1_malic_enz"/>
    <property type="match status" value="1"/>
</dbReference>
<dbReference type="FunFam" id="3.40.50.10380:FF:000001">
    <property type="entry name" value="NAD-dependent malic enzyme"/>
    <property type="match status" value="1"/>
</dbReference>
<dbReference type="FunFam" id="3.40.50.720:FF:000055">
    <property type="entry name" value="NAD-dependent malic enzyme"/>
    <property type="match status" value="1"/>
</dbReference>
<dbReference type="Gene3D" id="3.40.50.10380">
    <property type="entry name" value="Malic enzyme, N-terminal domain"/>
    <property type="match status" value="1"/>
</dbReference>
<dbReference type="Gene3D" id="3.40.50.720">
    <property type="entry name" value="NAD(P)-binding Rossmann-like Domain"/>
    <property type="match status" value="1"/>
</dbReference>
<dbReference type="HAMAP" id="MF_01619">
    <property type="entry name" value="NAD_malic_enz"/>
    <property type="match status" value="1"/>
</dbReference>
<dbReference type="InterPro" id="IPR046346">
    <property type="entry name" value="Aminoacid_DH-like_N_sf"/>
</dbReference>
<dbReference type="InterPro" id="IPR015884">
    <property type="entry name" value="Malic_enzyme_CS"/>
</dbReference>
<dbReference type="InterPro" id="IPR012301">
    <property type="entry name" value="Malic_N_dom"/>
</dbReference>
<dbReference type="InterPro" id="IPR037062">
    <property type="entry name" value="Malic_N_dom_sf"/>
</dbReference>
<dbReference type="InterPro" id="IPR012302">
    <property type="entry name" value="Malic_NAD-bd"/>
</dbReference>
<dbReference type="InterPro" id="IPR001891">
    <property type="entry name" value="Malic_OxRdtase"/>
</dbReference>
<dbReference type="InterPro" id="IPR036291">
    <property type="entry name" value="NAD(P)-bd_dom_sf"/>
</dbReference>
<dbReference type="InterPro" id="IPR023667">
    <property type="entry name" value="NAD_malic_enz_proteobac"/>
</dbReference>
<dbReference type="NCBIfam" id="NF010052">
    <property type="entry name" value="PRK13529.1"/>
    <property type="match status" value="1"/>
</dbReference>
<dbReference type="PANTHER" id="PTHR23406">
    <property type="entry name" value="MALIC ENZYME-RELATED"/>
    <property type="match status" value="1"/>
</dbReference>
<dbReference type="PANTHER" id="PTHR23406:SF34">
    <property type="entry name" value="NAD-DEPENDENT MALIC ENZYME, MITOCHONDRIAL"/>
    <property type="match status" value="1"/>
</dbReference>
<dbReference type="Pfam" id="PF00390">
    <property type="entry name" value="malic"/>
    <property type="match status" value="1"/>
</dbReference>
<dbReference type="Pfam" id="PF03949">
    <property type="entry name" value="Malic_M"/>
    <property type="match status" value="1"/>
</dbReference>
<dbReference type="PIRSF" id="PIRSF000106">
    <property type="entry name" value="ME"/>
    <property type="match status" value="1"/>
</dbReference>
<dbReference type="PRINTS" id="PR00072">
    <property type="entry name" value="MALOXRDTASE"/>
</dbReference>
<dbReference type="SMART" id="SM01274">
    <property type="entry name" value="malic"/>
    <property type="match status" value="1"/>
</dbReference>
<dbReference type="SMART" id="SM00919">
    <property type="entry name" value="Malic_M"/>
    <property type="match status" value="1"/>
</dbReference>
<dbReference type="SUPFAM" id="SSF53223">
    <property type="entry name" value="Aminoacid dehydrogenase-like, N-terminal domain"/>
    <property type="match status" value="1"/>
</dbReference>
<dbReference type="SUPFAM" id="SSF51735">
    <property type="entry name" value="NAD(P)-binding Rossmann-fold domains"/>
    <property type="match status" value="1"/>
</dbReference>
<dbReference type="PROSITE" id="PS00331">
    <property type="entry name" value="MALIC_ENZYMES"/>
    <property type="match status" value="1"/>
</dbReference>